<protein>
    <recommendedName>
        <fullName evidence="7">Probable lipase MIL1</fullName>
        <ecNumber evidence="9">3.1.1.-</ecNumber>
    </recommendedName>
    <alternativeName>
        <fullName evidence="7">Medium adaptin-interacting ligand 1</fullName>
    </alternativeName>
</protein>
<dbReference type="EC" id="3.1.1.-" evidence="9"/>
<dbReference type="EMBL" id="D50617">
    <property type="protein sequence ID" value="BAA09205.1"/>
    <property type="molecule type" value="Genomic_DNA"/>
</dbReference>
<dbReference type="EMBL" id="BK006940">
    <property type="protein sequence ID" value="DAA12407.2"/>
    <property type="molecule type" value="Genomic_DNA"/>
</dbReference>
<dbReference type="PIR" id="S56220">
    <property type="entry name" value="S56220"/>
</dbReference>
<dbReference type="RefSeq" id="NP_116583.2">
    <property type="nucleotide sequence ID" value="NM_001179932.2"/>
</dbReference>
<dbReference type="BioGRID" id="31113">
    <property type="interactions" value="87"/>
</dbReference>
<dbReference type="DIP" id="DIP-6508N"/>
<dbReference type="FunCoup" id="P43564">
    <property type="interactions" value="115"/>
</dbReference>
<dbReference type="IntAct" id="P43564">
    <property type="interactions" value="8"/>
</dbReference>
<dbReference type="MINT" id="P43564"/>
<dbReference type="STRING" id="4932.YFL034W"/>
<dbReference type="ESTHER" id="yeast-yfd4">
    <property type="family name" value="Duf_726"/>
</dbReference>
<dbReference type="GlyCosmos" id="P43564">
    <property type="glycosylation" value="8 sites, No reported glycans"/>
</dbReference>
<dbReference type="GlyGen" id="P43564">
    <property type="glycosylation" value="8 sites"/>
</dbReference>
<dbReference type="iPTMnet" id="P43564"/>
<dbReference type="PaxDb" id="4932-YFL034W"/>
<dbReference type="PeptideAtlas" id="P43564"/>
<dbReference type="EnsemblFungi" id="YFL034W_mRNA">
    <property type="protein sequence ID" value="YFL034W"/>
    <property type="gene ID" value="YFL034W"/>
</dbReference>
<dbReference type="GeneID" id="850510"/>
<dbReference type="KEGG" id="sce:YFL034W"/>
<dbReference type="AGR" id="SGD:S000001860"/>
<dbReference type="SGD" id="S000001860">
    <property type="gene designation" value="MIL1"/>
</dbReference>
<dbReference type="VEuPathDB" id="FungiDB:YFL034W"/>
<dbReference type="eggNOG" id="KOG2385">
    <property type="taxonomic scope" value="Eukaryota"/>
</dbReference>
<dbReference type="GeneTree" id="ENSGT00390000001400"/>
<dbReference type="HOGENOM" id="CLU_001695_2_1_1"/>
<dbReference type="InParanoid" id="P43564"/>
<dbReference type="OMA" id="KEVGWEV"/>
<dbReference type="OrthoDB" id="277931at2759"/>
<dbReference type="BioCyc" id="YEAST:G3O-30428-MONOMER"/>
<dbReference type="BioGRID-ORCS" id="850510">
    <property type="hits" value="0 hits in 10 CRISPR screens"/>
</dbReference>
<dbReference type="PRO" id="PR:P43564"/>
<dbReference type="Proteomes" id="UP000002311">
    <property type="component" value="Chromosome VI"/>
</dbReference>
<dbReference type="RNAct" id="P43564">
    <property type="molecule type" value="protein"/>
</dbReference>
<dbReference type="GO" id="GO:0030665">
    <property type="term" value="C:clathrin-coated vesicle membrane"/>
    <property type="evidence" value="ECO:0007669"/>
    <property type="project" value="UniProtKB-SubCell"/>
</dbReference>
<dbReference type="GO" id="GO:0031901">
    <property type="term" value="C:early endosome membrane"/>
    <property type="evidence" value="ECO:0007669"/>
    <property type="project" value="UniProtKB-SubCell"/>
</dbReference>
<dbReference type="GO" id="GO:0000139">
    <property type="term" value="C:Golgi membrane"/>
    <property type="evidence" value="ECO:0007669"/>
    <property type="project" value="UniProtKB-SubCell"/>
</dbReference>
<dbReference type="GO" id="GO:0016020">
    <property type="term" value="C:membrane"/>
    <property type="evidence" value="ECO:0000314"/>
    <property type="project" value="SGD"/>
</dbReference>
<dbReference type="GO" id="GO:0035650">
    <property type="term" value="F:AP-1 adaptor complex binding"/>
    <property type="evidence" value="ECO:0000314"/>
    <property type="project" value="SGD"/>
</dbReference>
<dbReference type="GO" id="GO:0016787">
    <property type="term" value="F:hydrolase activity"/>
    <property type="evidence" value="ECO:0007669"/>
    <property type="project" value="UniProtKB-KW"/>
</dbReference>
<dbReference type="GO" id="GO:0035652">
    <property type="term" value="P:clathrin-coated vesicle cargo loading"/>
    <property type="evidence" value="ECO:0000315"/>
    <property type="project" value="SGD"/>
</dbReference>
<dbReference type="InterPro" id="IPR029058">
    <property type="entry name" value="AB_hydrolase_fold"/>
</dbReference>
<dbReference type="InterPro" id="IPR007941">
    <property type="entry name" value="DUF726"/>
</dbReference>
<dbReference type="PANTHER" id="PTHR17920:SF3">
    <property type="entry name" value="TRANSMEMBRANE AND COILED-COIL DOMAIN-CONTAINING PROTEIN 4"/>
    <property type="match status" value="1"/>
</dbReference>
<dbReference type="PANTHER" id="PTHR17920">
    <property type="entry name" value="TRANSMEMBRANE AND COILED-COIL DOMAIN-CONTAINING PROTEIN 4 TMCO4"/>
    <property type="match status" value="1"/>
</dbReference>
<dbReference type="Pfam" id="PF05277">
    <property type="entry name" value="DUF726"/>
    <property type="match status" value="1"/>
</dbReference>
<dbReference type="SUPFAM" id="SSF53474">
    <property type="entry name" value="alpha/beta-Hydrolases"/>
    <property type="match status" value="1"/>
</dbReference>
<keyword id="KW-0968">Cytoplasmic vesicle</keyword>
<keyword id="KW-0967">Endosome</keyword>
<keyword id="KW-0325">Glycoprotein</keyword>
<keyword id="KW-0333">Golgi apparatus</keyword>
<keyword id="KW-0378">Hydrolase</keyword>
<keyword id="KW-0472">Membrane</keyword>
<keyword id="KW-0597">Phosphoprotein</keyword>
<keyword id="KW-1185">Reference proteome</keyword>
<keyword id="KW-0812">Transmembrane</keyword>
<keyword id="KW-1133">Transmembrane helix</keyword>
<accession>P43564</accession>
<accession>D6VTJ7</accession>
<sequence>MSDSEEDLGVQLKGLKIARHLKESGEHTDEESNSSPEHDCGLSNQDDLTVMHTQAKEEVFKRREEDGTRTEDALHEGEAGKEGTGFPSSQSVCSPNEADSGIDRADKPILLDPFKSVHDTDPVPGTKSRSNSDSDSDSDDGGWQEMPAVSSFNIYNHRGELELTSKVRNSEQASETSPTVPPGKNCKSVNDSRFDYTKMAAEQQAQRSYRTNKKTDFLFDHKVLKKKINSSQTSVNLTSSPSTTSLNNEKNNDDDDDDSYDEYEDDVEPVNDLNRDSQLNITKNLLSDMEKFAYVGAINILANQMCTNLATLCLCIDIKSHKKLAHRLQFTQKDMAAWKTVVLSRLYDHLGISQEEIVMIEKLSLHKIQLEDLCKCLKTTQSIDNPWENDRDHEEDGIEETTERMSPNEQNGSVQASTPDPEQSATPETPKAKQSPLSSDVPGKVLDPENVKSQDKLNIDVAWTIICDLFLICLQSSTYDSRSRTLLINFAKVLNMTSLEICEFERRVTDSLDMEQSTEDQVWDEQDHMRNRRRSKRRKKMAYVALAMVGGSLVLGLSGGLLAPVIGGGIAAGLSTIGITGATSFLTGVGGTTVVAVSSTAIGANIGARGMSKRMGSVRTFEFRPLHNNRRVNLILTVSGWMVGNEDDVRLPFSTVDPVEGDLYSLYWEPEMLKSIGQTVSIVATEIFTTSLQQILGATVLTALISSIQWPMALSKLGYILDNPWNVSLDRAWSAGKILADTLIARNLGARPITLVGFSIGARVIFSCLIELCKKKALGLIENVYLFGTPAVMKKEQLVMARSVVSGRFVNGYSDKDWFLAYLFRAAAGGFSAVMGISTIENVEGIENINCTEFVDGHLNYRKSMPKLLKRIGIAVLSEEFVEIEEMMNPEEVKRKRKLINDVDAAQKKLSERKKHNSWVPKWLKPKKSKWKVMVEEAVEEGRDMQDLPENDVNNNENENPDEHEGIARQKRRDAALVDHGALMHELQLIKQAMHEDEIKNKACLPGEDKEVESSNDFLGESHYKPPSTPKINPPQSPNNFQLLSAGRTILPEDDDFDPRGKKKVEFSFPDDI</sequence>
<comment type="function">
    <text evidence="6">Probable lipase that recruits the AP-1-related (AP-1R) complex to membranes via interaction with APM2 (PubMed:26658609). The AP-1R complex is an adapter protein complex that mediates of cargo protein SNC1 sorting in clathrin-coated vesicles (PubMed:26658609).</text>
</comment>
<comment type="subunit">
    <text evidence="5 6">Interacts with RPP0 (PubMed:15286401). Interacts with APM2 (PubMed:26658609).</text>
</comment>
<comment type="subcellular location">
    <subcellularLocation>
        <location evidence="6">Golgi apparatus membrane</location>
        <topology evidence="1">Multi-pass membrane protein</topology>
    </subcellularLocation>
    <subcellularLocation>
        <location evidence="6">Early endosome membrane</location>
        <topology evidence="1">Multi-pass membrane protein</topology>
    </subcellularLocation>
    <subcellularLocation>
        <location evidence="6">Cytoplasmic vesicle</location>
        <location evidence="6">Clathrin-coated vesicle membrane</location>
        <topology evidence="1">Multi-pass membrane protein</topology>
    </subcellularLocation>
</comment>
<comment type="miscellaneous">
    <text evidence="4">Present with 1110 molecules/cell in log phase SD medium.</text>
</comment>
<comment type="similarity">
    <text evidence="8">Belongs to the TMCO4 family.</text>
</comment>
<reference key="1">
    <citation type="journal article" date="1995" name="Nat. Genet.">
        <title>Analysis of the nucleotide sequence of chromosome VI from Saccharomyces cerevisiae.</title>
        <authorList>
            <person name="Murakami Y."/>
            <person name="Naitou M."/>
            <person name="Hagiwara H."/>
            <person name="Shibata T."/>
            <person name="Ozawa M."/>
            <person name="Sasanuma S."/>
            <person name="Sasanuma M."/>
            <person name="Tsuchiya Y."/>
            <person name="Soeda E."/>
            <person name="Yokoyama K."/>
            <person name="Yamazaki M."/>
            <person name="Tashiro H."/>
            <person name="Eki T."/>
        </authorList>
    </citation>
    <scope>NUCLEOTIDE SEQUENCE [LARGE SCALE GENOMIC DNA]</scope>
    <source>
        <strain>ATCC 204508 / S288c</strain>
    </source>
</reference>
<reference key="2">
    <citation type="journal article" date="2014" name="G3 (Bethesda)">
        <title>The reference genome sequence of Saccharomyces cerevisiae: Then and now.</title>
        <authorList>
            <person name="Engel S.R."/>
            <person name="Dietrich F.S."/>
            <person name="Fisk D.G."/>
            <person name="Binkley G."/>
            <person name="Balakrishnan R."/>
            <person name="Costanzo M.C."/>
            <person name="Dwight S.S."/>
            <person name="Hitz B.C."/>
            <person name="Karra K."/>
            <person name="Nash R.S."/>
            <person name="Weng S."/>
            <person name="Wong E.D."/>
            <person name="Lloyd P."/>
            <person name="Skrzypek M.S."/>
            <person name="Miyasato S.R."/>
            <person name="Simison M."/>
            <person name="Cherry J.M."/>
        </authorList>
    </citation>
    <scope>GENOME REANNOTATION</scope>
    <scope>SEQUENCE REVISION TO 323</scope>
    <source>
        <strain>ATCC 204508 / S288c</strain>
    </source>
</reference>
<reference key="3">
    <citation type="journal article" date="2003" name="Nature">
        <title>Global analysis of protein expression in yeast.</title>
        <authorList>
            <person name="Ghaemmaghami S."/>
            <person name="Huh W.-K."/>
            <person name="Bower K."/>
            <person name="Howson R.W."/>
            <person name="Belle A."/>
            <person name="Dephoure N."/>
            <person name="O'Shea E.K."/>
            <person name="Weissman J.S."/>
        </authorList>
    </citation>
    <scope>LEVEL OF PROTEIN EXPRESSION [LARGE SCALE ANALYSIS]</scope>
</reference>
<reference key="4">
    <citation type="journal article" date="2004" name="J. Biosci.">
        <title>Identification of a hypothetical membrane protein interactor of ribosomal phosphoprotein P0.</title>
        <authorList>
            <person name="Aruna K."/>
            <person name="Chakraborty T."/>
            <person name="Nambeesan S."/>
            <person name="Mannan A.B."/>
            <person name="Sehgal A."/>
            <person name="Balachandara S.R."/>
            <person name="Sharma S."/>
        </authorList>
    </citation>
    <scope>INTERACTION WITH RPP0</scope>
</reference>
<reference key="5">
    <citation type="journal article" date="2006" name="Proc. Natl. Acad. Sci. U.S.A.">
        <title>A global topology map of the Saccharomyces cerevisiae membrane proteome.</title>
        <authorList>
            <person name="Kim H."/>
            <person name="Melen K."/>
            <person name="Oesterberg M."/>
            <person name="von Heijne G."/>
        </authorList>
    </citation>
    <scope>TOPOLOGY [LARGE SCALE ANALYSIS]</scope>
    <source>
        <strain>ATCC 208353 / W303-1A</strain>
    </source>
</reference>
<reference key="6">
    <citation type="journal article" date="2007" name="J. Proteome Res.">
        <title>Large-scale phosphorylation analysis of alpha-factor-arrested Saccharomyces cerevisiae.</title>
        <authorList>
            <person name="Li X."/>
            <person name="Gerber S.A."/>
            <person name="Rudner A.D."/>
            <person name="Beausoleil S.A."/>
            <person name="Haas W."/>
            <person name="Villen J."/>
            <person name="Elias J.E."/>
            <person name="Gygi S.P."/>
        </authorList>
    </citation>
    <scope>IDENTIFICATION BY MASS SPECTROMETRY [LARGE SCALE ANALYSIS]</scope>
    <source>
        <strain>ADR376</strain>
    </source>
</reference>
<reference key="7">
    <citation type="journal article" date="2008" name="Mol. Cell. Proteomics">
        <title>A multidimensional chromatography technology for in-depth phosphoproteome analysis.</title>
        <authorList>
            <person name="Albuquerque C.P."/>
            <person name="Smolka M.B."/>
            <person name="Payne S.H."/>
            <person name="Bafna V."/>
            <person name="Eng J."/>
            <person name="Zhou H."/>
        </authorList>
    </citation>
    <scope>PHOSPHORYLATION [LARGE SCALE ANALYSIS] AT SER-1037</scope>
    <scope>IDENTIFICATION BY MASS SPECTROMETRY [LARGE SCALE ANALYSIS]</scope>
</reference>
<reference key="8">
    <citation type="journal article" date="2009" name="Science">
        <title>Global analysis of Cdk1 substrate phosphorylation sites provides insights into evolution.</title>
        <authorList>
            <person name="Holt L.J."/>
            <person name="Tuch B.B."/>
            <person name="Villen J."/>
            <person name="Johnson A.D."/>
            <person name="Gygi S.P."/>
            <person name="Morgan D.O."/>
        </authorList>
    </citation>
    <scope>PHOSPHORYLATION [LARGE SCALE ANALYSIS] AT SER-435</scope>
    <scope>IDENTIFICATION BY MASS SPECTROMETRY [LARGE SCALE ANALYSIS]</scope>
</reference>
<reference key="9">
    <citation type="journal article" date="2016" name="Mol. Biol. Cell">
        <title>The alternate AP-1 adaptor subunit Apm2 interacts with the Mil1 regulatory protein and confers differential cargo sorting.</title>
        <authorList>
            <person name="Whitfield S.T."/>
            <person name="Burston H.E."/>
            <person name="Bean B.D."/>
            <person name="Raghuram N."/>
            <person name="Maldonado-Baez L."/>
            <person name="Davey M."/>
            <person name="Wendland B."/>
            <person name="Conibear E."/>
        </authorList>
    </citation>
    <scope>FUNCTION</scope>
    <scope>INTERACTION WITH APM2</scope>
    <scope>DOMAIN</scope>
    <scope>MUTAGENESIS OF 143-TRP--PRO-147; SER-759; ASP-817 AND HIS-858</scope>
</reference>
<gene>
    <name evidence="7" type="primary">MIL1</name>
    <name type="ordered locus">YFL034W</name>
</gene>
<name>MIL1_YEAST</name>
<feature type="chain" id="PRO_0000202674" description="Probable lipase MIL1">
    <location>
        <begin position="1"/>
        <end position="1073"/>
    </location>
</feature>
<feature type="transmembrane region" description="Helical" evidence="1">
    <location>
        <begin position="292"/>
        <end position="312"/>
    </location>
</feature>
<feature type="transmembrane region" description="Helical" evidence="1">
    <location>
        <begin position="457"/>
        <end position="477"/>
    </location>
</feature>
<feature type="transmembrane region" description="Helical" evidence="1">
    <location>
        <begin position="553"/>
        <end position="573"/>
    </location>
</feature>
<feature type="transmembrane region" description="Helical" evidence="1">
    <location>
        <begin position="577"/>
        <end position="597"/>
    </location>
</feature>
<feature type="transmembrane region" description="Helical" evidence="1">
    <location>
        <begin position="818"/>
        <end position="838"/>
    </location>
</feature>
<feature type="region of interest" description="Disordered" evidence="3">
    <location>
        <begin position="1"/>
        <end position="151"/>
    </location>
</feature>
<feature type="region of interest" description="Disordered" evidence="3">
    <location>
        <begin position="163"/>
        <end position="190"/>
    </location>
</feature>
<feature type="region of interest" description="Disordered" evidence="3">
    <location>
        <begin position="230"/>
        <end position="267"/>
    </location>
</feature>
<feature type="region of interest" description="Disordered" evidence="3">
    <location>
        <begin position="385"/>
        <end position="448"/>
    </location>
</feature>
<feature type="region of interest" description="Disordered" evidence="3">
    <location>
        <begin position="942"/>
        <end position="968"/>
    </location>
</feature>
<feature type="region of interest" description="Disordered" evidence="3">
    <location>
        <begin position="1010"/>
        <end position="1073"/>
    </location>
</feature>
<feature type="short sequence motif" description="APM2-interacting WQEMP motif" evidence="6">
    <location>
        <begin position="143"/>
        <end position="147"/>
    </location>
</feature>
<feature type="compositionally biased region" description="Basic and acidic residues" evidence="3">
    <location>
        <begin position="54"/>
        <end position="81"/>
    </location>
</feature>
<feature type="compositionally biased region" description="Basic and acidic residues" evidence="3">
    <location>
        <begin position="101"/>
        <end position="121"/>
    </location>
</feature>
<feature type="compositionally biased region" description="Low complexity" evidence="3">
    <location>
        <begin position="233"/>
        <end position="249"/>
    </location>
</feature>
<feature type="compositionally biased region" description="Acidic residues" evidence="3">
    <location>
        <begin position="252"/>
        <end position="267"/>
    </location>
</feature>
<feature type="compositionally biased region" description="Polar residues" evidence="3">
    <location>
        <begin position="404"/>
        <end position="427"/>
    </location>
</feature>
<feature type="compositionally biased region" description="Pro residues" evidence="3">
    <location>
        <begin position="1027"/>
        <end position="1037"/>
    </location>
</feature>
<feature type="modified residue" description="Phosphoserine" evidence="11">
    <location>
        <position position="435"/>
    </location>
</feature>
<feature type="modified residue" description="Phosphoserine" evidence="10">
    <location>
        <position position="1037"/>
    </location>
</feature>
<feature type="glycosylation site" description="N-linked (GlcNAc...) asparagine" evidence="2">
    <location>
        <position position="190"/>
    </location>
</feature>
<feature type="glycosylation site" description="N-linked (GlcNAc...) asparagine" evidence="2">
    <location>
        <position position="229"/>
    </location>
</feature>
<feature type="glycosylation site" description="N-linked (GlcNAc...) asparagine" evidence="2">
    <location>
        <position position="236"/>
    </location>
</feature>
<feature type="glycosylation site" description="N-linked (GlcNAc...) asparagine" evidence="2">
    <location>
        <position position="280"/>
    </location>
</feature>
<feature type="glycosylation site" description="N-linked (GlcNAc...) asparagine" evidence="2">
    <location>
        <position position="411"/>
    </location>
</feature>
<feature type="glycosylation site" description="N-linked (GlcNAc...) asparagine" evidence="2">
    <location>
        <position position="495"/>
    </location>
</feature>
<feature type="glycosylation site" description="N-linked (GlcNAc...) asparagine" evidence="2">
    <location>
        <position position="726"/>
    </location>
</feature>
<feature type="glycosylation site" description="N-linked (GlcNAc...) asparagine" evidence="2">
    <location>
        <position position="850"/>
    </location>
</feature>
<feature type="mutagenesis site" description="Impairs the interaction with APM2 and its recruitment to membranes, and leads to sertraline sensitivity." evidence="6">
    <original>WQEMP</original>
    <variation>AAEAA</variation>
    <location>
        <begin position="143"/>
        <end position="147"/>
    </location>
</feature>
<feature type="mutagenesis site" description="Increases sensitivity to sertraline." evidence="6">
    <original>S</original>
    <variation>A</variation>
    <location>
        <position position="759"/>
    </location>
</feature>
<feature type="mutagenesis site" description="Increases sensitivity to sertraline." evidence="6">
    <original>D</original>
    <variation>A</variation>
    <location>
        <position position="817"/>
    </location>
</feature>
<feature type="mutagenesis site" description="Increases sensitivity to sertraline." evidence="6">
    <original>H</original>
    <variation>A</variation>
    <location>
        <position position="858"/>
    </location>
</feature>
<feature type="sequence conflict" description="In Ref. 1; BAA09205." evidence="8" ref="1">
    <original>K</original>
    <variation>N</variation>
    <location>
        <position position="323"/>
    </location>
</feature>
<organism>
    <name type="scientific">Saccharomyces cerevisiae (strain ATCC 204508 / S288c)</name>
    <name type="common">Baker's yeast</name>
    <dbReference type="NCBI Taxonomy" id="559292"/>
    <lineage>
        <taxon>Eukaryota</taxon>
        <taxon>Fungi</taxon>
        <taxon>Dikarya</taxon>
        <taxon>Ascomycota</taxon>
        <taxon>Saccharomycotina</taxon>
        <taxon>Saccharomycetes</taxon>
        <taxon>Saccharomycetales</taxon>
        <taxon>Saccharomycetaceae</taxon>
        <taxon>Saccharomyces</taxon>
    </lineage>
</organism>
<proteinExistence type="evidence at protein level"/>
<evidence type="ECO:0000255" key="1"/>
<evidence type="ECO:0000255" key="2">
    <source>
        <dbReference type="PROSITE-ProRule" id="PRU00498"/>
    </source>
</evidence>
<evidence type="ECO:0000256" key="3">
    <source>
        <dbReference type="SAM" id="MobiDB-lite"/>
    </source>
</evidence>
<evidence type="ECO:0000269" key="4">
    <source>
    </source>
</evidence>
<evidence type="ECO:0000269" key="5">
    <source>
    </source>
</evidence>
<evidence type="ECO:0000269" key="6">
    <source>
    </source>
</evidence>
<evidence type="ECO:0000303" key="7">
    <source>
    </source>
</evidence>
<evidence type="ECO:0000305" key="8"/>
<evidence type="ECO:0000305" key="9">
    <source>
    </source>
</evidence>
<evidence type="ECO:0007744" key="10">
    <source>
    </source>
</evidence>
<evidence type="ECO:0007744" key="11">
    <source>
    </source>
</evidence>